<protein>
    <recommendedName>
        <fullName evidence="1">Acetylglutamate kinase</fullName>
        <ecNumber evidence="1">2.7.2.8</ecNumber>
    </recommendedName>
    <alternativeName>
        <fullName evidence="1">N-acetyl-L-glutamate 5-phosphotransferase</fullName>
    </alternativeName>
    <alternativeName>
        <fullName evidence="1">NAG kinase</fullName>
        <shortName evidence="1">NAGK</shortName>
    </alternativeName>
</protein>
<dbReference type="EC" id="2.7.2.8" evidence="1"/>
<dbReference type="EMBL" id="CP000778">
    <property type="protein sequence ID" value="ABZ95987.1"/>
    <property type="molecule type" value="Genomic_DNA"/>
</dbReference>
<dbReference type="RefSeq" id="WP_012476842.1">
    <property type="nucleotide sequence ID" value="NC_010845.1"/>
</dbReference>
<dbReference type="SMR" id="B0SIF3"/>
<dbReference type="KEGG" id="lbf:LBF_4165"/>
<dbReference type="HOGENOM" id="CLU_053680_0_0_12"/>
<dbReference type="UniPathway" id="UPA00068">
    <property type="reaction ID" value="UER00107"/>
</dbReference>
<dbReference type="GO" id="GO:0005737">
    <property type="term" value="C:cytoplasm"/>
    <property type="evidence" value="ECO:0007669"/>
    <property type="project" value="UniProtKB-SubCell"/>
</dbReference>
<dbReference type="GO" id="GO:0003991">
    <property type="term" value="F:acetylglutamate kinase activity"/>
    <property type="evidence" value="ECO:0007669"/>
    <property type="project" value="UniProtKB-UniRule"/>
</dbReference>
<dbReference type="GO" id="GO:0005524">
    <property type="term" value="F:ATP binding"/>
    <property type="evidence" value="ECO:0007669"/>
    <property type="project" value="UniProtKB-UniRule"/>
</dbReference>
<dbReference type="GO" id="GO:0042450">
    <property type="term" value="P:arginine biosynthetic process via ornithine"/>
    <property type="evidence" value="ECO:0007669"/>
    <property type="project" value="UniProtKB-UniRule"/>
</dbReference>
<dbReference type="GO" id="GO:0006526">
    <property type="term" value="P:L-arginine biosynthetic process"/>
    <property type="evidence" value="ECO:0007669"/>
    <property type="project" value="UniProtKB-UniPathway"/>
</dbReference>
<dbReference type="CDD" id="cd04250">
    <property type="entry name" value="AAK_NAGK-C"/>
    <property type="match status" value="1"/>
</dbReference>
<dbReference type="FunFam" id="3.40.1160.10:FF:000004">
    <property type="entry name" value="Acetylglutamate kinase"/>
    <property type="match status" value="1"/>
</dbReference>
<dbReference type="Gene3D" id="3.40.1160.10">
    <property type="entry name" value="Acetylglutamate kinase-like"/>
    <property type="match status" value="1"/>
</dbReference>
<dbReference type="HAMAP" id="MF_00082">
    <property type="entry name" value="ArgB"/>
    <property type="match status" value="1"/>
</dbReference>
<dbReference type="InterPro" id="IPR036393">
    <property type="entry name" value="AceGlu_kinase-like_sf"/>
</dbReference>
<dbReference type="InterPro" id="IPR004662">
    <property type="entry name" value="AcgluKinase_fam"/>
</dbReference>
<dbReference type="InterPro" id="IPR037528">
    <property type="entry name" value="ArgB"/>
</dbReference>
<dbReference type="InterPro" id="IPR001048">
    <property type="entry name" value="Asp/Glu/Uridylate_kinase"/>
</dbReference>
<dbReference type="InterPro" id="IPR041727">
    <property type="entry name" value="NAGK-C"/>
</dbReference>
<dbReference type="NCBIfam" id="TIGR00761">
    <property type="entry name" value="argB"/>
    <property type="match status" value="1"/>
</dbReference>
<dbReference type="PANTHER" id="PTHR23342">
    <property type="entry name" value="N-ACETYLGLUTAMATE SYNTHASE"/>
    <property type="match status" value="1"/>
</dbReference>
<dbReference type="PANTHER" id="PTHR23342:SF0">
    <property type="entry name" value="N-ACETYLGLUTAMATE SYNTHASE, MITOCHONDRIAL"/>
    <property type="match status" value="1"/>
</dbReference>
<dbReference type="Pfam" id="PF00696">
    <property type="entry name" value="AA_kinase"/>
    <property type="match status" value="1"/>
</dbReference>
<dbReference type="PIRSF" id="PIRSF000728">
    <property type="entry name" value="NAGK"/>
    <property type="match status" value="1"/>
</dbReference>
<dbReference type="SUPFAM" id="SSF53633">
    <property type="entry name" value="Carbamate kinase-like"/>
    <property type="match status" value="1"/>
</dbReference>
<proteinExistence type="inferred from homology"/>
<feature type="chain" id="PRO_0000335639" description="Acetylglutamate kinase">
    <location>
        <begin position="1"/>
        <end position="292"/>
    </location>
</feature>
<feature type="binding site" evidence="1">
    <location>
        <begin position="64"/>
        <end position="65"/>
    </location>
    <ligand>
        <name>substrate</name>
    </ligand>
</feature>
<feature type="binding site" evidence="1">
    <location>
        <position position="86"/>
    </location>
    <ligand>
        <name>substrate</name>
    </ligand>
</feature>
<feature type="binding site" evidence="1">
    <location>
        <position position="190"/>
    </location>
    <ligand>
        <name>substrate</name>
    </ligand>
</feature>
<feature type="site" description="Transition state stabilizer" evidence="1">
    <location>
        <position position="29"/>
    </location>
</feature>
<feature type="site" description="Transition state stabilizer" evidence="1">
    <location>
        <position position="249"/>
    </location>
</feature>
<evidence type="ECO:0000255" key="1">
    <source>
        <dbReference type="HAMAP-Rule" id="MF_00082"/>
    </source>
</evidence>
<organism>
    <name type="scientific">Leptospira biflexa serovar Patoc (strain Patoc 1 / Ames)</name>
    <dbReference type="NCBI Taxonomy" id="355278"/>
    <lineage>
        <taxon>Bacteria</taxon>
        <taxon>Pseudomonadati</taxon>
        <taxon>Spirochaetota</taxon>
        <taxon>Spirochaetia</taxon>
        <taxon>Leptospirales</taxon>
        <taxon>Leptospiraceae</taxon>
        <taxon>Leptospira</taxon>
    </lineage>
</organism>
<name>ARGB_LEPBA</name>
<reference key="1">
    <citation type="journal article" date="2008" name="PLoS ONE">
        <title>Genome sequence of the saprophyte Leptospira biflexa provides insights into the evolution of Leptospira and the pathogenesis of leptospirosis.</title>
        <authorList>
            <person name="Picardeau M."/>
            <person name="Bulach D.M."/>
            <person name="Bouchier C."/>
            <person name="Zuerner R.L."/>
            <person name="Zidane N."/>
            <person name="Wilson P.J."/>
            <person name="Creno S."/>
            <person name="Kuczek E.S."/>
            <person name="Bommezzadri S."/>
            <person name="Davis J.C."/>
            <person name="McGrath A."/>
            <person name="Johnson M.J."/>
            <person name="Boursaux-Eude C."/>
            <person name="Seemann T."/>
            <person name="Rouy Z."/>
            <person name="Coppel R.L."/>
            <person name="Rood J.I."/>
            <person name="Lajus A."/>
            <person name="Davies J.K."/>
            <person name="Medigue C."/>
            <person name="Adler B."/>
        </authorList>
    </citation>
    <scope>NUCLEOTIDE SEQUENCE [LARGE SCALE GENOMIC DNA]</scope>
    <source>
        <strain>Patoc 1 / Ames</strain>
    </source>
</reference>
<keyword id="KW-0028">Amino-acid biosynthesis</keyword>
<keyword id="KW-0055">Arginine biosynthesis</keyword>
<keyword id="KW-0067">ATP-binding</keyword>
<keyword id="KW-0963">Cytoplasm</keyword>
<keyword id="KW-0418">Kinase</keyword>
<keyword id="KW-0547">Nucleotide-binding</keyword>
<keyword id="KW-0808">Transferase</keyword>
<gene>
    <name evidence="1" type="primary">argB</name>
    <name type="ordered locus">LBF_4165</name>
</gene>
<sequence>MNHQSEKINHILEALPYLINYSGKTIVIKYGGAAMVEEELKASFAEDIVLLKYLGINPVVVHGGGPEINSLIKSLNLNTQFIRGHRVTDEATMEVVEMVLTGKVNKQIVSLIQEKGGKPVGLSGKDGGLAIAEKYLMEVEAEDGKSQKIDLGLVGEITSVDPNIILTLQREGFIPIISPVAMSKEGQTLNINADTMAGAIAQALHADKLILLTDTPGILIDGQLVTGLKKVDIHGYIKTGQISGGMIPKVECCLGAIDSGVKRAHIIDGRVPHSVLIEILTNQGIGSLIEQG</sequence>
<accession>B0SIF3</accession>
<comment type="function">
    <text evidence="1">Catalyzes the ATP-dependent phosphorylation of N-acetyl-L-glutamate.</text>
</comment>
<comment type="catalytic activity">
    <reaction evidence="1">
        <text>N-acetyl-L-glutamate + ATP = N-acetyl-L-glutamyl 5-phosphate + ADP</text>
        <dbReference type="Rhea" id="RHEA:14629"/>
        <dbReference type="ChEBI" id="CHEBI:30616"/>
        <dbReference type="ChEBI" id="CHEBI:44337"/>
        <dbReference type="ChEBI" id="CHEBI:57936"/>
        <dbReference type="ChEBI" id="CHEBI:456216"/>
        <dbReference type="EC" id="2.7.2.8"/>
    </reaction>
</comment>
<comment type="pathway">
    <text evidence="1">Amino-acid biosynthesis; L-arginine biosynthesis; N(2)-acetyl-L-ornithine from L-glutamate: step 2/4.</text>
</comment>
<comment type="subcellular location">
    <subcellularLocation>
        <location evidence="1">Cytoplasm</location>
    </subcellularLocation>
</comment>
<comment type="similarity">
    <text evidence="1">Belongs to the acetylglutamate kinase family. ArgB subfamily.</text>
</comment>